<name>T2R36_HUMAN</name>
<dbReference type="EMBL" id="AX097755">
    <property type="status" value="NOT_ANNOTATED_CDS"/>
    <property type="molecule type" value="Unassigned_DNA"/>
</dbReference>
<dbReference type="SMR" id="P0DTE0"/>
<dbReference type="GlyCosmos" id="P0DTE0">
    <property type="glycosylation" value="2 sites, No reported glycans"/>
</dbReference>
<dbReference type="GlyGen" id="P0DTE0">
    <property type="glycosylation" value="2 sites"/>
</dbReference>
<dbReference type="MassIVE" id="P0DTE0"/>
<dbReference type="PeptideAtlas" id="P0DTE0"/>
<dbReference type="AGR" id="HGNC:19115"/>
<dbReference type="GeneCards" id="TAS2R36"/>
<dbReference type="HGNC" id="HGNC:19115">
    <property type="gene designation" value="TAS2R36"/>
</dbReference>
<dbReference type="neXtProt" id="NX_P0DTE0"/>
<dbReference type="InParanoid" id="P0DTE0"/>
<dbReference type="Proteomes" id="UP000005640">
    <property type="component" value="Unplaced"/>
</dbReference>
<dbReference type="GO" id="GO:0016020">
    <property type="term" value="C:membrane"/>
    <property type="evidence" value="ECO:0000318"/>
    <property type="project" value="GO_Central"/>
</dbReference>
<dbReference type="GO" id="GO:0005886">
    <property type="term" value="C:plasma membrane"/>
    <property type="evidence" value="ECO:0007669"/>
    <property type="project" value="UniProtKB-ARBA"/>
</dbReference>
<dbReference type="GO" id="GO:0033038">
    <property type="term" value="F:bitter taste receptor activity"/>
    <property type="evidence" value="ECO:0007669"/>
    <property type="project" value="InterPro"/>
</dbReference>
<dbReference type="GO" id="GO:0004930">
    <property type="term" value="F:G protein-coupled receptor activity"/>
    <property type="evidence" value="ECO:0007669"/>
    <property type="project" value="UniProtKB-KW"/>
</dbReference>
<dbReference type="CDD" id="cd15027">
    <property type="entry name" value="7tm_TAS2R43-like"/>
    <property type="match status" value="1"/>
</dbReference>
<dbReference type="FunFam" id="1.20.1070.10:FF:000042">
    <property type="entry name" value="Taste receptor type 2 member 7"/>
    <property type="match status" value="1"/>
</dbReference>
<dbReference type="Gene3D" id="1.20.1070.10">
    <property type="entry name" value="Rhodopsin 7-helix transmembrane proteins"/>
    <property type="match status" value="1"/>
</dbReference>
<dbReference type="InterPro" id="IPR007960">
    <property type="entry name" value="TAS2R"/>
</dbReference>
<dbReference type="PANTHER" id="PTHR11394">
    <property type="entry name" value="TASTE RECEPTOR TYPE 2"/>
    <property type="match status" value="1"/>
</dbReference>
<dbReference type="PANTHER" id="PTHR11394:SF139">
    <property type="entry name" value="TASTE RECEPTOR TYPE 2 MEMBER 19-RELATED"/>
    <property type="match status" value="1"/>
</dbReference>
<dbReference type="Pfam" id="PF05296">
    <property type="entry name" value="TAS2R"/>
    <property type="match status" value="1"/>
</dbReference>
<dbReference type="SUPFAM" id="SSF81321">
    <property type="entry name" value="Family A G protein-coupled receptor-like"/>
    <property type="match status" value="1"/>
</dbReference>
<sequence length="309" mass="35420">MICFLLIILSILVVFAFVLGNFSNGFIALVNVIDWVKRQKISSADQILTALVVSRVGLLWVILLHWYSNVLNSALYSSEVIIFISNAWAIINHFSIWLATSLSIFYLLKIVNFSRLIFHHLKRKAKSVVLVIVLGPLVFLVCHLVMKHTYINVWTKEYEGNVTWKIKLRNAIHLSNLTVSTLANLIPFTLTLISFLLLIYSLCKHLKKMQLHGKGSQDPSTKVHIKALQTVTSFLLLCAIYFLSMIISVCNFGRLEKQPVFMFCQAIIFSYPSTHPFILILGNKKLKQIFLSVFWQMRYWVKGEKPSSP</sequence>
<accession>P0DTE0</accession>
<reference key="1">
    <citation type="patent" date="2001-03-15" number="WO0118050">
        <title>T2r taste receptor family.</title>
        <authorList>
            <person name="Zuker C.S."/>
            <person name="Adler J.E."/>
            <person name="Ryba N."/>
            <person name="Mueller K."/>
            <person name="Hoon M."/>
        </authorList>
    </citation>
    <scope>NUCLEOTIDE SEQUENCE [GENOMIC DNA]</scope>
</reference>
<proteinExistence type="uncertain"/>
<keyword id="KW-0297">G-protein coupled receptor</keyword>
<keyword id="KW-0325">Glycoprotein</keyword>
<keyword id="KW-0472">Membrane</keyword>
<keyword id="KW-0675">Receptor</keyword>
<keyword id="KW-1185">Reference proteome</keyword>
<keyword id="KW-0716">Sensory transduction</keyword>
<keyword id="KW-0919">Taste</keyword>
<keyword id="KW-0807">Transducer</keyword>
<keyword id="KW-0812">Transmembrane</keyword>
<keyword id="KW-1133">Transmembrane helix</keyword>
<protein>
    <recommendedName>
        <fullName evidence="3">Putative taste receptor type 2 member 36</fullName>
        <shortName evidence="2">T2R36</shortName>
        <shortName evidence="2">hGR36</shortName>
    </recommendedName>
</protein>
<evidence type="ECO:0000255" key="1"/>
<evidence type="ECO:0000303" key="2">
    <source ref="1"/>
</evidence>
<evidence type="ECO:0000305" key="3"/>
<evidence type="ECO:0000312" key="4">
    <source>
        <dbReference type="HGNC" id="HGNC:19115"/>
    </source>
</evidence>
<gene>
    <name evidence="4" type="primary">TAS2R36</name>
</gene>
<comment type="function">
    <text evidence="3">Putative taste receptor which may play a role in the perception of bitterness.</text>
</comment>
<comment type="subcellular location">
    <subcellularLocation>
        <location evidence="1">Membrane</location>
        <topology evidence="1">Multi-pass membrane protein</topology>
    </subcellularLocation>
</comment>
<comment type="similarity">
    <text evidence="3">Belongs to the G-protein coupled receptor T2R family.</text>
</comment>
<comment type="caution">
    <text evidence="3">Product of a dubious gene prediction. Zuker et al. identified this gene on chromosome 12. However, it is not currently present on the reference genome assembly (GRCh38/hg38).</text>
</comment>
<organism>
    <name type="scientific">Homo sapiens</name>
    <name type="common">Human</name>
    <dbReference type="NCBI Taxonomy" id="9606"/>
    <lineage>
        <taxon>Eukaryota</taxon>
        <taxon>Metazoa</taxon>
        <taxon>Chordata</taxon>
        <taxon>Craniata</taxon>
        <taxon>Vertebrata</taxon>
        <taxon>Euteleostomi</taxon>
        <taxon>Mammalia</taxon>
        <taxon>Eutheria</taxon>
        <taxon>Euarchontoglires</taxon>
        <taxon>Primates</taxon>
        <taxon>Haplorrhini</taxon>
        <taxon>Catarrhini</taxon>
        <taxon>Hominidae</taxon>
        <taxon>Homo</taxon>
    </lineage>
</organism>
<feature type="chain" id="PRO_0000450482" description="Putative taste receptor type 2 member 36">
    <location>
        <begin position="1"/>
        <end position="309"/>
    </location>
</feature>
<feature type="topological domain" description="Extracellular" evidence="3">
    <location>
        <position position="1"/>
    </location>
</feature>
<feature type="transmembrane region" description="Helical" evidence="1">
    <location>
        <begin position="2"/>
        <end position="22"/>
    </location>
</feature>
<feature type="topological domain" description="Cytoplasmic" evidence="3">
    <location>
        <begin position="23"/>
        <end position="46"/>
    </location>
</feature>
<feature type="transmembrane region" description="Helical" evidence="1">
    <location>
        <begin position="47"/>
        <end position="67"/>
    </location>
</feature>
<feature type="topological domain" description="Extracellular" evidence="3">
    <location>
        <begin position="68"/>
        <end position="79"/>
    </location>
</feature>
<feature type="transmembrane region" description="Helical" evidence="1">
    <location>
        <begin position="80"/>
        <end position="100"/>
    </location>
</feature>
<feature type="topological domain" description="Cytoplasmic" evidence="3">
    <location>
        <begin position="101"/>
        <end position="126"/>
    </location>
</feature>
<feature type="transmembrane region" description="Helical" evidence="1">
    <location>
        <begin position="127"/>
        <end position="147"/>
    </location>
</feature>
<feature type="topological domain" description="Extracellular" evidence="3">
    <location>
        <begin position="148"/>
        <end position="181"/>
    </location>
</feature>
<feature type="transmembrane region" description="Helical" evidence="1">
    <location>
        <begin position="182"/>
        <end position="202"/>
    </location>
</feature>
<feature type="topological domain" description="Cytoplasmic" evidence="3">
    <location>
        <begin position="203"/>
        <end position="229"/>
    </location>
</feature>
<feature type="transmembrane region" description="Helical" evidence="1">
    <location>
        <begin position="230"/>
        <end position="250"/>
    </location>
</feature>
<feature type="topological domain" description="Extracellular" evidence="3">
    <location>
        <begin position="251"/>
        <end position="259"/>
    </location>
</feature>
<feature type="transmembrane region" description="Helical" evidence="1">
    <location>
        <begin position="260"/>
        <end position="280"/>
    </location>
</feature>
<feature type="topological domain" description="Cytoplasmic" evidence="3">
    <location>
        <begin position="281"/>
        <end position="309"/>
    </location>
</feature>
<feature type="glycosylation site" description="N-linked (GlcNAc...) asparagine" evidence="1">
    <location>
        <position position="161"/>
    </location>
</feature>
<feature type="glycosylation site" description="N-linked (GlcNAc...) asparagine" evidence="1">
    <location>
        <position position="176"/>
    </location>
</feature>